<keyword id="KW-0997">Cell inner membrane</keyword>
<keyword id="KW-1003">Cell membrane</keyword>
<keyword id="KW-0143">Chaperone</keyword>
<keyword id="KW-0472">Membrane</keyword>
<keyword id="KW-0653">Protein transport</keyword>
<keyword id="KW-0812">Transmembrane</keyword>
<keyword id="KW-1133">Transmembrane helix</keyword>
<keyword id="KW-0813">Transport</keyword>
<sequence>MDSQRNLLVIALLFVSFMIWQAWEQDKNPQPQAQQTTQTTTTAAGSAADQGVPASGQGKLISVKTDVLDLTINTRGGDVEQALLPAYPKELNSTQPFQLLETSPQFIYQAQSGLTGRDGPDNPANGPRPLYNVEKDAYVLAEGQNELQVPMTYTDAAGNTFTKTFVLKRGDYAVNVNYNVQNAGEKPLEISTFGQLKQSITLPPHLDTGSSNFALHTFRGAAYSTPDEKYEKYKFDTIADNENLNISSKGGWVAMLQQYFATAWIPHNDGTNNFYTANLGNGIAAIGYKSQPVLVQPGQTGAMNSTLWVGPEIQDKMAAVAPHLDLTVDYGWLWFISQPLFKLLKWIHSFVGNWGFSIIIITFIVRGIMYPLTKAQYTSMAKMRMLQPKIQAMRERLGDDKQRISQEMMALYKAEKVNPLGGCFPLLIQMPIFLALYYMLMGSVELRQAPFALWIHDLSAQDPYYILPILMGVTMFFIQKMSPTTVTDPMQQKIMTFMPVIFTVFFLWFPSGLVLYYIVSNLVTIIQQQLIYRGLEKRGLHSREKKKS</sequence>
<feature type="chain" id="PRO_1000187659" description="Membrane protein insertase YidC">
    <location>
        <begin position="1"/>
        <end position="548"/>
    </location>
</feature>
<feature type="transmembrane region" description="Helical" evidence="1">
    <location>
        <begin position="6"/>
        <end position="26"/>
    </location>
</feature>
<feature type="transmembrane region" description="Helical" evidence="1">
    <location>
        <begin position="350"/>
        <end position="370"/>
    </location>
</feature>
<feature type="transmembrane region" description="Helical" evidence="1">
    <location>
        <begin position="420"/>
        <end position="440"/>
    </location>
</feature>
<feature type="transmembrane region" description="Helical" evidence="1">
    <location>
        <begin position="458"/>
        <end position="478"/>
    </location>
</feature>
<feature type="transmembrane region" description="Helical" evidence="1">
    <location>
        <begin position="499"/>
        <end position="519"/>
    </location>
</feature>
<feature type="region of interest" description="Disordered" evidence="2">
    <location>
        <begin position="28"/>
        <end position="55"/>
    </location>
</feature>
<feature type="compositionally biased region" description="Low complexity" evidence="2">
    <location>
        <begin position="30"/>
        <end position="50"/>
    </location>
</feature>
<dbReference type="EMBL" id="CU928164">
    <property type="protein sequence ID" value="CAR20416.1"/>
    <property type="molecule type" value="Genomic_DNA"/>
</dbReference>
<dbReference type="RefSeq" id="WP_000378258.1">
    <property type="nucleotide sequence ID" value="NC_011750.1"/>
</dbReference>
<dbReference type="RefSeq" id="YP_002410184.1">
    <property type="nucleotide sequence ID" value="NC_011750.1"/>
</dbReference>
<dbReference type="SMR" id="B7NR08"/>
<dbReference type="STRING" id="585057.ECIAI39_4310"/>
<dbReference type="GeneID" id="93778448"/>
<dbReference type="KEGG" id="ect:ECIAI39_4310"/>
<dbReference type="PATRIC" id="fig|585057.6.peg.4455"/>
<dbReference type="HOGENOM" id="CLU_016535_3_0_6"/>
<dbReference type="Proteomes" id="UP000000749">
    <property type="component" value="Chromosome"/>
</dbReference>
<dbReference type="GO" id="GO:0005886">
    <property type="term" value="C:plasma membrane"/>
    <property type="evidence" value="ECO:0007669"/>
    <property type="project" value="UniProtKB-SubCell"/>
</dbReference>
<dbReference type="GO" id="GO:0032977">
    <property type="term" value="F:membrane insertase activity"/>
    <property type="evidence" value="ECO:0007669"/>
    <property type="project" value="InterPro"/>
</dbReference>
<dbReference type="GO" id="GO:0051205">
    <property type="term" value="P:protein insertion into membrane"/>
    <property type="evidence" value="ECO:0007669"/>
    <property type="project" value="TreeGrafter"/>
</dbReference>
<dbReference type="GO" id="GO:0015031">
    <property type="term" value="P:protein transport"/>
    <property type="evidence" value="ECO:0007669"/>
    <property type="project" value="UniProtKB-KW"/>
</dbReference>
<dbReference type="CDD" id="cd20070">
    <property type="entry name" value="5TM_YidC_Alb3"/>
    <property type="match status" value="1"/>
</dbReference>
<dbReference type="CDD" id="cd19961">
    <property type="entry name" value="EcYidC-like_peri"/>
    <property type="match status" value="1"/>
</dbReference>
<dbReference type="FunFam" id="2.70.98.90:FF:000001">
    <property type="entry name" value="Membrane protein insertase YidC"/>
    <property type="match status" value="1"/>
</dbReference>
<dbReference type="Gene3D" id="2.70.98.90">
    <property type="match status" value="1"/>
</dbReference>
<dbReference type="HAMAP" id="MF_01810">
    <property type="entry name" value="YidC_type1"/>
    <property type="match status" value="1"/>
</dbReference>
<dbReference type="InterPro" id="IPR019998">
    <property type="entry name" value="Membr_insert_YidC"/>
</dbReference>
<dbReference type="InterPro" id="IPR028053">
    <property type="entry name" value="Membr_insert_YidC_N"/>
</dbReference>
<dbReference type="InterPro" id="IPR001708">
    <property type="entry name" value="YidC/ALB3/OXA1/COX18"/>
</dbReference>
<dbReference type="InterPro" id="IPR028055">
    <property type="entry name" value="YidC/Oxa/ALB_C"/>
</dbReference>
<dbReference type="InterPro" id="IPR047196">
    <property type="entry name" value="YidC_ALB_C"/>
</dbReference>
<dbReference type="InterPro" id="IPR038221">
    <property type="entry name" value="YidC_periplasmic_sf"/>
</dbReference>
<dbReference type="NCBIfam" id="NF002351">
    <property type="entry name" value="PRK01318.1-1"/>
    <property type="match status" value="1"/>
</dbReference>
<dbReference type="NCBIfam" id="NF002352">
    <property type="entry name" value="PRK01318.1-3"/>
    <property type="match status" value="1"/>
</dbReference>
<dbReference type="NCBIfam" id="NF002353">
    <property type="entry name" value="PRK01318.1-4"/>
    <property type="match status" value="1"/>
</dbReference>
<dbReference type="NCBIfam" id="TIGR03593">
    <property type="entry name" value="yidC_nterm"/>
    <property type="match status" value="1"/>
</dbReference>
<dbReference type="NCBIfam" id="TIGR03592">
    <property type="entry name" value="yidC_oxa1_cterm"/>
    <property type="match status" value="1"/>
</dbReference>
<dbReference type="PANTHER" id="PTHR12428:SF65">
    <property type="entry name" value="CYTOCHROME C OXIDASE ASSEMBLY PROTEIN COX18, MITOCHONDRIAL"/>
    <property type="match status" value="1"/>
</dbReference>
<dbReference type="PANTHER" id="PTHR12428">
    <property type="entry name" value="OXA1"/>
    <property type="match status" value="1"/>
</dbReference>
<dbReference type="Pfam" id="PF02096">
    <property type="entry name" value="60KD_IMP"/>
    <property type="match status" value="1"/>
</dbReference>
<dbReference type="Pfam" id="PF14849">
    <property type="entry name" value="YidC_periplas"/>
    <property type="match status" value="1"/>
</dbReference>
<dbReference type="PRINTS" id="PR00701">
    <property type="entry name" value="60KDINNERMP"/>
</dbReference>
<dbReference type="PRINTS" id="PR01900">
    <property type="entry name" value="YIDCPROTEIN"/>
</dbReference>
<name>YIDC_ECO7I</name>
<gene>
    <name evidence="1" type="primary">yidC</name>
    <name type="ordered locus">ECIAI39_4310</name>
</gene>
<protein>
    <recommendedName>
        <fullName evidence="1">Membrane protein insertase YidC</fullName>
    </recommendedName>
    <alternativeName>
        <fullName evidence="1">Foldase YidC</fullName>
    </alternativeName>
    <alternativeName>
        <fullName evidence="1">Membrane integrase YidC</fullName>
    </alternativeName>
    <alternativeName>
        <fullName evidence="1">Membrane protein YidC</fullName>
    </alternativeName>
</protein>
<evidence type="ECO:0000255" key="1">
    <source>
        <dbReference type="HAMAP-Rule" id="MF_01810"/>
    </source>
</evidence>
<evidence type="ECO:0000256" key="2">
    <source>
        <dbReference type="SAM" id="MobiDB-lite"/>
    </source>
</evidence>
<organism>
    <name type="scientific">Escherichia coli O7:K1 (strain IAI39 / ExPEC)</name>
    <dbReference type="NCBI Taxonomy" id="585057"/>
    <lineage>
        <taxon>Bacteria</taxon>
        <taxon>Pseudomonadati</taxon>
        <taxon>Pseudomonadota</taxon>
        <taxon>Gammaproteobacteria</taxon>
        <taxon>Enterobacterales</taxon>
        <taxon>Enterobacteriaceae</taxon>
        <taxon>Escherichia</taxon>
    </lineage>
</organism>
<accession>B7NR08</accession>
<comment type="function">
    <text evidence="1">Required for the insertion and/or proper folding and/or complex formation of integral membrane proteins into the membrane. Involved in integration of membrane proteins that insert both dependently and independently of the Sec translocase complex, as well as at least some lipoproteins. Aids folding of multispanning membrane proteins.</text>
</comment>
<comment type="subunit">
    <text evidence="1">Interacts with the Sec translocase complex via SecD. Specifically interacts with transmembrane segments of nascent integral membrane proteins during membrane integration.</text>
</comment>
<comment type="subcellular location">
    <subcellularLocation>
        <location evidence="1">Cell inner membrane</location>
        <topology evidence="1">Multi-pass membrane protein</topology>
    </subcellularLocation>
</comment>
<comment type="similarity">
    <text evidence="1">Belongs to the OXA1/ALB3/YidC family. Type 1 subfamily.</text>
</comment>
<reference key="1">
    <citation type="journal article" date="2009" name="PLoS Genet.">
        <title>Organised genome dynamics in the Escherichia coli species results in highly diverse adaptive paths.</title>
        <authorList>
            <person name="Touchon M."/>
            <person name="Hoede C."/>
            <person name="Tenaillon O."/>
            <person name="Barbe V."/>
            <person name="Baeriswyl S."/>
            <person name="Bidet P."/>
            <person name="Bingen E."/>
            <person name="Bonacorsi S."/>
            <person name="Bouchier C."/>
            <person name="Bouvet O."/>
            <person name="Calteau A."/>
            <person name="Chiapello H."/>
            <person name="Clermont O."/>
            <person name="Cruveiller S."/>
            <person name="Danchin A."/>
            <person name="Diard M."/>
            <person name="Dossat C."/>
            <person name="Karoui M.E."/>
            <person name="Frapy E."/>
            <person name="Garry L."/>
            <person name="Ghigo J.M."/>
            <person name="Gilles A.M."/>
            <person name="Johnson J."/>
            <person name="Le Bouguenec C."/>
            <person name="Lescat M."/>
            <person name="Mangenot S."/>
            <person name="Martinez-Jehanne V."/>
            <person name="Matic I."/>
            <person name="Nassif X."/>
            <person name="Oztas S."/>
            <person name="Petit M.A."/>
            <person name="Pichon C."/>
            <person name="Rouy Z."/>
            <person name="Ruf C.S."/>
            <person name="Schneider D."/>
            <person name="Tourret J."/>
            <person name="Vacherie B."/>
            <person name="Vallenet D."/>
            <person name="Medigue C."/>
            <person name="Rocha E.P.C."/>
            <person name="Denamur E."/>
        </authorList>
    </citation>
    <scope>NUCLEOTIDE SEQUENCE [LARGE SCALE GENOMIC DNA]</scope>
    <source>
        <strain>IAI39 / ExPEC</strain>
    </source>
</reference>
<proteinExistence type="inferred from homology"/>